<protein>
    <recommendedName>
        <fullName evidence="1">UDP-N-acetylmuramate--L-alanine ligase</fullName>
        <ecNumber evidence="1">6.3.2.8</ecNumber>
    </recommendedName>
    <alternativeName>
        <fullName evidence="1">UDP-N-acetylmuramoyl-L-alanine synthetase</fullName>
    </alternativeName>
</protein>
<sequence>MYQKNYHIYFVGIGGIGMSAIAELLLSLGYRVSGSDLKLSAITQRLASCGATIFNGHRADQVKDVDVLVTSTAISKNNPEVIEAAERSIRTIPRAEMLAELMRIKYAIAVSGAHGKTSTTAMIATILNQAGLDPTVVVGGLLKSIGTNAHHGKGDYIVAEADESDGSFLKYAPAIAAVTNIDLEHLDFYKDIEDIKDNFVKFINSVPFYGLAVLCLDNEHIQAILPRITARYTTFGLSAQADLAARGIRFEGRRGYFTVVHGKEVLGDITLNLSGKHNISNALAAIAVALELKVDFSVIKEALEQIEGVKRRLEIKGERNSITVVDDYGHHPTEVKTTLAAVREGWPDKRVVVVFQPHRYSRTKALFDEFTRAFYQSDLLFVLPIYAASEQPIDGIDSLKLCNGIQEHGHKNVICVKDFESCLSILSDTLEPGDLVLTLGAGDVYNLGETLLEILA</sequence>
<reference key="1">
    <citation type="journal article" date="2009" name="Environ. Microbiol.">
        <title>Genome sequence of Desulfobacterium autotrophicum HRM2, a marine sulfate reducer oxidizing organic carbon completely to carbon dioxide.</title>
        <authorList>
            <person name="Strittmatter A.W."/>
            <person name="Liesegang H."/>
            <person name="Rabus R."/>
            <person name="Decker I."/>
            <person name="Amann J."/>
            <person name="Andres S."/>
            <person name="Henne A."/>
            <person name="Fricke W.F."/>
            <person name="Martinez-Arias R."/>
            <person name="Bartels D."/>
            <person name="Goesmann A."/>
            <person name="Krause L."/>
            <person name="Puehler A."/>
            <person name="Klenk H.P."/>
            <person name="Richter M."/>
            <person name="Schuler M."/>
            <person name="Gloeckner F.O."/>
            <person name="Meyerdierks A."/>
            <person name="Gottschalk G."/>
            <person name="Amann R."/>
        </authorList>
    </citation>
    <scope>NUCLEOTIDE SEQUENCE [LARGE SCALE GENOMIC DNA]</scope>
    <source>
        <strain>ATCC 43914 / DSM 3382 / VKM B-1955 / HRM2</strain>
    </source>
</reference>
<proteinExistence type="inferred from homology"/>
<comment type="function">
    <text evidence="1">Cell wall formation.</text>
</comment>
<comment type="catalytic activity">
    <reaction evidence="1">
        <text>UDP-N-acetyl-alpha-D-muramate + L-alanine + ATP = UDP-N-acetyl-alpha-D-muramoyl-L-alanine + ADP + phosphate + H(+)</text>
        <dbReference type="Rhea" id="RHEA:23372"/>
        <dbReference type="ChEBI" id="CHEBI:15378"/>
        <dbReference type="ChEBI" id="CHEBI:30616"/>
        <dbReference type="ChEBI" id="CHEBI:43474"/>
        <dbReference type="ChEBI" id="CHEBI:57972"/>
        <dbReference type="ChEBI" id="CHEBI:70757"/>
        <dbReference type="ChEBI" id="CHEBI:83898"/>
        <dbReference type="ChEBI" id="CHEBI:456216"/>
        <dbReference type="EC" id="6.3.2.8"/>
    </reaction>
</comment>
<comment type="pathway">
    <text evidence="1">Cell wall biogenesis; peptidoglycan biosynthesis.</text>
</comment>
<comment type="subcellular location">
    <subcellularLocation>
        <location evidence="1">Cytoplasm</location>
    </subcellularLocation>
</comment>
<comment type="similarity">
    <text evidence="1">Belongs to the MurCDEF family.</text>
</comment>
<accession>C0Q8P4</accession>
<evidence type="ECO:0000255" key="1">
    <source>
        <dbReference type="HAMAP-Rule" id="MF_00046"/>
    </source>
</evidence>
<feature type="chain" id="PRO_1000202175" description="UDP-N-acetylmuramate--L-alanine ligase">
    <location>
        <begin position="1"/>
        <end position="456"/>
    </location>
</feature>
<feature type="binding site" evidence="1">
    <location>
        <begin position="112"/>
        <end position="118"/>
    </location>
    <ligand>
        <name>ATP</name>
        <dbReference type="ChEBI" id="CHEBI:30616"/>
    </ligand>
</feature>
<dbReference type="EC" id="6.3.2.8" evidence="1"/>
<dbReference type="EMBL" id="CP001087">
    <property type="protein sequence ID" value="ACN14384.1"/>
    <property type="molecule type" value="Genomic_DNA"/>
</dbReference>
<dbReference type="RefSeq" id="WP_015903171.1">
    <property type="nucleotide sequence ID" value="NC_012108.1"/>
</dbReference>
<dbReference type="SMR" id="C0Q8P4"/>
<dbReference type="STRING" id="177437.HRM2_12720"/>
<dbReference type="KEGG" id="dat:HRM2_12720"/>
<dbReference type="eggNOG" id="COG0773">
    <property type="taxonomic scope" value="Bacteria"/>
</dbReference>
<dbReference type="HOGENOM" id="CLU_028104_2_1_7"/>
<dbReference type="OrthoDB" id="9804126at2"/>
<dbReference type="UniPathway" id="UPA00219"/>
<dbReference type="Proteomes" id="UP000000442">
    <property type="component" value="Chromosome"/>
</dbReference>
<dbReference type="GO" id="GO:0005737">
    <property type="term" value="C:cytoplasm"/>
    <property type="evidence" value="ECO:0007669"/>
    <property type="project" value="UniProtKB-SubCell"/>
</dbReference>
<dbReference type="GO" id="GO:0005524">
    <property type="term" value="F:ATP binding"/>
    <property type="evidence" value="ECO:0007669"/>
    <property type="project" value="UniProtKB-UniRule"/>
</dbReference>
<dbReference type="GO" id="GO:0008763">
    <property type="term" value="F:UDP-N-acetylmuramate-L-alanine ligase activity"/>
    <property type="evidence" value="ECO:0007669"/>
    <property type="project" value="UniProtKB-UniRule"/>
</dbReference>
<dbReference type="GO" id="GO:0051301">
    <property type="term" value="P:cell division"/>
    <property type="evidence" value="ECO:0007669"/>
    <property type="project" value="UniProtKB-KW"/>
</dbReference>
<dbReference type="GO" id="GO:0071555">
    <property type="term" value="P:cell wall organization"/>
    <property type="evidence" value="ECO:0007669"/>
    <property type="project" value="UniProtKB-KW"/>
</dbReference>
<dbReference type="GO" id="GO:0009252">
    <property type="term" value="P:peptidoglycan biosynthetic process"/>
    <property type="evidence" value="ECO:0007669"/>
    <property type="project" value="UniProtKB-UniRule"/>
</dbReference>
<dbReference type="GO" id="GO:0008360">
    <property type="term" value="P:regulation of cell shape"/>
    <property type="evidence" value="ECO:0007669"/>
    <property type="project" value="UniProtKB-KW"/>
</dbReference>
<dbReference type="Gene3D" id="3.90.190.20">
    <property type="entry name" value="Mur ligase, C-terminal domain"/>
    <property type="match status" value="1"/>
</dbReference>
<dbReference type="Gene3D" id="3.40.1190.10">
    <property type="entry name" value="Mur-like, catalytic domain"/>
    <property type="match status" value="1"/>
</dbReference>
<dbReference type="Gene3D" id="3.40.50.720">
    <property type="entry name" value="NAD(P)-binding Rossmann-like Domain"/>
    <property type="match status" value="1"/>
</dbReference>
<dbReference type="HAMAP" id="MF_00046">
    <property type="entry name" value="MurC"/>
    <property type="match status" value="1"/>
</dbReference>
<dbReference type="InterPro" id="IPR036565">
    <property type="entry name" value="Mur-like_cat_sf"/>
</dbReference>
<dbReference type="InterPro" id="IPR004101">
    <property type="entry name" value="Mur_ligase_C"/>
</dbReference>
<dbReference type="InterPro" id="IPR036615">
    <property type="entry name" value="Mur_ligase_C_dom_sf"/>
</dbReference>
<dbReference type="InterPro" id="IPR013221">
    <property type="entry name" value="Mur_ligase_cen"/>
</dbReference>
<dbReference type="InterPro" id="IPR000713">
    <property type="entry name" value="Mur_ligase_N"/>
</dbReference>
<dbReference type="InterPro" id="IPR050061">
    <property type="entry name" value="MurCDEF_pg_biosynth"/>
</dbReference>
<dbReference type="InterPro" id="IPR005758">
    <property type="entry name" value="UDP-N-AcMur_Ala_ligase_MurC"/>
</dbReference>
<dbReference type="NCBIfam" id="TIGR01082">
    <property type="entry name" value="murC"/>
    <property type="match status" value="1"/>
</dbReference>
<dbReference type="PANTHER" id="PTHR43445:SF3">
    <property type="entry name" value="UDP-N-ACETYLMURAMATE--L-ALANINE LIGASE"/>
    <property type="match status" value="1"/>
</dbReference>
<dbReference type="PANTHER" id="PTHR43445">
    <property type="entry name" value="UDP-N-ACETYLMURAMATE--L-ALANINE LIGASE-RELATED"/>
    <property type="match status" value="1"/>
</dbReference>
<dbReference type="Pfam" id="PF01225">
    <property type="entry name" value="Mur_ligase"/>
    <property type="match status" value="1"/>
</dbReference>
<dbReference type="Pfam" id="PF02875">
    <property type="entry name" value="Mur_ligase_C"/>
    <property type="match status" value="1"/>
</dbReference>
<dbReference type="Pfam" id="PF08245">
    <property type="entry name" value="Mur_ligase_M"/>
    <property type="match status" value="1"/>
</dbReference>
<dbReference type="SUPFAM" id="SSF51984">
    <property type="entry name" value="MurCD N-terminal domain"/>
    <property type="match status" value="1"/>
</dbReference>
<dbReference type="SUPFAM" id="SSF53623">
    <property type="entry name" value="MurD-like peptide ligases, catalytic domain"/>
    <property type="match status" value="1"/>
</dbReference>
<dbReference type="SUPFAM" id="SSF53244">
    <property type="entry name" value="MurD-like peptide ligases, peptide-binding domain"/>
    <property type="match status" value="1"/>
</dbReference>
<name>MURC_DESAH</name>
<organism>
    <name type="scientific">Desulforapulum autotrophicum (strain ATCC 43914 / DSM 3382 / VKM B-1955 / HRM2)</name>
    <name type="common">Desulfobacterium autotrophicum</name>
    <dbReference type="NCBI Taxonomy" id="177437"/>
    <lineage>
        <taxon>Bacteria</taxon>
        <taxon>Pseudomonadati</taxon>
        <taxon>Thermodesulfobacteriota</taxon>
        <taxon>Desulfobacteria</taxon>
        <taxon>Desulfobacterales</taxon>
        <taxon>Desulfobacteraceae</taxon>
        <taxon>Desulforapulum</taxon>
    </lineage>
</organism>
<keyword id="KW-0067">ATP-binding</keyword>
<keyword id="KW-0131">Cell cycle</keyword>
<keyword id="KW-0132">Cell division</keyword>
<keyword id="KW-0133">Cell shape</keyword>
<keyword id="KW-0961">Cell wall biogenesis/degradation</keyword>
<keyword id="KW-0963">Cytoplasm</keyword>
<keyword id="KW-0436">Ligase</keyword>
<keyword id="KW-0547">Nucleotide-binding</keyword>
<keyword id="KW-0573">Peptidoglycan synthesis</keyword>
<keyword id="KW-1185">Reference proteome</keyword>
<gene>
    <name evidence="1" type="primary">murC</name>
    <name type="ordered locus">HRM2_12720</name>
</gene>